<name>J64R_ASFB7</name>
<gene>
    <name type="primary">J64R</name>
</gene>
<evidence type="ECO:0000269" key="1">
    <source>
    </source>
</evidence>
<reference key="1">
    <citation type="journal article" date="1995" name="Virology">
        <title>Analysis of the complete nucleotide sequence of African swine fever virus.</title>
        <authorList>
            <person name="Yanez R.J."/>
            <person name="Rodriguez J.M."/>
            <person name="Nogal M.L."/>
            <person name="Yuste L."/>
            <person name="Enriquez C."/>
            <person name="Rodriguez J.F."/>
            <person name="Vinuela E."/>
        </authorList>
    </citation>
    <scope>NUCLEOTIDE SEQUENCE [LARGE SCALE GENOMIC DNA]</scope>
</reference>
<reference key="2">
    <citation type="journal article" date="2020" name="J. Virol.">
        <title>The African Swine Fever Virus Transcriptome.</title>
        <authorList>
            <person name="Cackett G."/>
            <person name="Matelska D."/>
            <person name="Sykora M."/>
            <person name="Portugal R."/>
            <person name="Malecki M."/>
            <person name="Baehler J."/>
            <person name="Dixon L."/>
            <person name="Werner F."/>
        </authorList>
    </citation>
    <scope>INDUCTION</scope>
</reference>
<dbReference type="EMBL" id="U18466">
    <property type="protein sequence ID" value="AIU95045.1"/>
    <property type="molecule type" value="Genomic_DNA"/>
</dbReference>
<dbReference type="RefSeq" id="YP_009094906.1">
    <property type="nucleotide sequence ID" value="NC_001659.2"/>
</dbReference>
<dbReference type="SMR" id="A0A097SRX8"/>
<dbReference type="GeneID" id="22220405"/>
<dbReference type="KEGG" id="vg:22220405"/>
<dbReference type="Proteomes" id="UP000000624">
    <property type="component" value="Segment"/>
</dbReference>
<organism>
    <name type="scientific">African swine fever virus (strain Badajoz 1971 Vero-adapted)</name>
    <name type="common">Ba71V</name>
    <name type="synonym">ASFV</name>
    <dbReference type="NCBI Taxonomy" id="10498"/>
    <lineage>
        <taxon>Viruses</taxon>
        <taxon>Varidnaviria</taxon>
        <taxon>Bamfordvirae</taxon>
        <taxon>Nucleocytoviricota</taxon>
        <taxon>Pokkesviricetes</taxon>
        <taxon>Asfuvirales</taxon>
        <taxon>Asfarviridae</taxon>
        <taxon>Asfivirus</taxon>
        <taxon>African swine fever virus</taxon>
    </lineage>
</organism>
<keyword id="KW-0244">Early protein</keyword>
<keyword id="KW-1185">Reference proteome</keyword>
<proteinExistence type="evidence at transcript level"/>
<comment type="induction">
    <text evidence="1">Expressed in the early phase of the viral replicative cycle.</text>
</comment>
<accession>A0A097SRX8</accession>
<protein>
    <recommendedName>
        <fullName>Uncharacterized protein J64R</fullName>
    </recommendedName>
</protein>
<feature type="chain" id="PRO_0000444976" description="Uncharacterized protein J64R">
    <location>
        <begin position="1"/>
        <end position="64"/>
    </location>
</feature>
<sequence>MLLYIVIIVAYVSYKLVPKQYWPILMFMAYMVYTHEKLDINERSGFWKYIIAKLFRCHGCEICK</sequence>
<organismHost>
    <name type="scientific">Ornithodoros</name>
    <name type="common">relapsing fever ticks</name>
    <dbReference type="NCBI Taxonomy" id="6937"/>
</organismHost>
<organismHost>
    <name type="scientific">Sus scrofa</name>
    <name type="common">Pig</name>
    <dbReference type="NCBI Taxonomy" id="9823"/>
</organismHost>